<proteinExistence type="evidence at transcript level"/>
<evidence type="ECO:0000250" key="1"/>
<evidence type="ECO:0000255" key="2">
    <source>
        <dbReference type="PROSITE-ProRule" id="PRU00132"/>
    </source>
</evidence>
<comment type="function">
    <text>Central component in molecular interactions underlying sperm crawling. Forms an extensive filament system that extends from sperm villipoda, along the leading edge of the pseudopod.</text>
</comment>
<comment type="subcellular location">
    <subcellularLocation>
        <location>Cell projection</location>
        <location>Pseudopodium</location>
    </subcellularLocation>
    <subcellularLocation>
        <location>Cytoplasm</location>
        <location>Cytoskeleton</location>
    </subcellularLocation>
</comment>
<comment type="tissue specificity">
    <text>Sperm.</text>
</comment>
<comment type="miscellaneous">
    <text>Around 30 MSP isoforms may exist in C.elegans.</text>
</comment>
<feature type="initiator methionine" description="Removed" evidence="1">
    <location>
        <position position="1"/>
    </location>
</feature>
<feature type="chain" id="PRO_0000213445" description="Major sperm protein 78">
    <location>
        <begin position="2"/>
        <end position="127"/>
    </location>
</feature>
<feature type="domain" description="MSP" evidence="2">
    <location>
        <begin position="9"/>
        <end position="126"/>
    </location>
</feature>
<feature type="modified residue" description="N-acetylalanine" evidence="1">
    <location>
        <position position="2"/>
    </location>
</feature>
<sequence length="127" mass="14223">MAQSVPPGDIQTQPGTKIVFNAPYDDKHTYHIKVINSSARRIGYGIKTTNMKRLGVDPPCGVLDPKEAVLLAVSCDAFAFGQEDTNNDRITIEWTNTPDGAAKQFRREWFQGDGMVRRKNLPIEYNP</sequence>
<reference key="1">
    <citation type="journal article" date="1998" name="Science">
        <title>Genome sequence of the nematode C. elegans: a platform for investigating biology.</title>
        <authorList>
            <consortium name="The C. elegans sequencing consortium"/>
        </authorList>
    </citation>
    <scope>NUCLEOTIDE SEQUENCE [LARGE SCALE GENOMIC DNA]</scope>
    <source>
        <strain>Bristol N2</strain>
    </source>
</reference>
<name>MSP78_CAEEL</name>
<protein>
    <recommendedName>
        <fullName>Major sperm protein 78</fullName>
        <shortName>MSP</shortName>
    </recommendedName>
</protein>
<accession>Q94053</accession>
<keyword id="KW-0007">Acetylation</keyword>
<keyword id="KW-0966">Cell projection</keyword>
<keyword id="KW-0963">Cytoplasm</keyword>
<keyword id="KW-0206">Cytoskeleton</keyword>
<keyword id="KW-1185">Reference proteome</keyword>
<dbReference type="EMBL" id="Z81122">
    <property type="protein sequence ID" value="CAB03362.1"/>
    <property type="molecule type" value="Genomic_DNA"/>
</dbReference>
<dbReference type="PIR" id="T24885">
    <property type="entry name" value="T24885"/>
</dbReference>
<dbReference type="RefSeq" id="NP_501742.1">
    <property type="nucleotide sequence ID" value="NM_069341.6"/>
</dbReference>
<dbReference type="SMR" id="Q94053"/>
<dbReference type="FunCoup" id="Q94053">
    <property type="interactions" value="11"/>
</dbReference>
<dbReference type="STRING" id="6239.T13F2.11.1"/>
<dbReference type="PaxDb" id="6239-T13F2.11"/>
<dbReference type="PeptideAtlas" id="Q94053"/>
<dbReference type="EnsemblMetazoa" id="T13F2.11.1">
    <property type="protein sequence ID" value="T13F2.11.1"/>
    <property type="gene ID" value="WBGene00003465"/>
</dbReference>
<dbReference type="GeneID" id="177814"/>
<dbReference type="KEGG" id="cel:CELE_T13F2.11"/>
<dbReference type="UCSC" id="T13F2.11">
    <property type="organism name" value="c. elegans"/>
</dbReference>
<dbReference type="AGR" id="WB:WBGene00003465"/>
<dbReference type="CTD" id="177814"/>
<dbReference type="WormBase" id="T13F2.11">
    <property type="protein sequence ID" value="CE13638"/>
    <property type="gene ID" value="WBGene00003465"/>
    <property type="gene designation" value="msp-78"/>
</dbReference>
<dbReference type="eggNOG" id="ENOG502RXF6">
    <property type="taxonomic scope" value="Eukaryota"/>
</dbReference>
<dbReference type="GeneTree" id="ENSGT00970000195833"/>
<dbReference type="HOGENOM" id="CLU_120664_0_1_1"/>
<dbReference type="InParanoid" id="Q94053"/>
<dbReference type="OMA" id="PCGVLHP"/>
<dbReference type="OrthoDB" id="5918453at2759"/>
<dbReference type="PhylomeDB" id="Q94053"/>
<dbReference type="PRO" id="PR:Q94053"/>
<dbReference type="Proteomes" id="UP000001940">
    <property type="component" value="Chromosome IV"/>
</dbReference>
<dbReference type="Bgee" id="WBGene00003465">
    <property type="expression patterns" value="Expressed in adult organism and 2 other cell types or tissues"/>
</dbReference>
<dbReference type="GO" id="GO:0005737">
    <property type="term" value="C:cytoplasm"/>
    <property type="evidence" value="ECO:0007669"/>
    <property type="project" value="UniProtKB-KW"/>
</dbReference>
<dbReference type="GO" id="GO:0005856">
    <property type="term" value="C:cytoskeleton"/>
    <property type="evidence" value="ECO:0007669"/>
    <property type="project" value="UniProtKB-SubCell"/>
</dbReference>
<dbReference type="GO" id="GO:0031143">
    <property type="term" value="C:pseudopodium"/>
    <property type="evidence" value="ECO:0007669"/>
    <property type="project" value="UniProtKB-SubCell"/>
</dbReference>
<dbReference type="FunFam" id="2.60.40.10:FF:001120">
    <property type="entry name" value="Major sperm protein 19/31/40/45/50/51/53/59/61/65/81/113/142"/>
    <property type="match status" value="1"/>
</dbReference>
<dbReference type="Gene3D" id="2.60.40.10">
    <property type="entry name" value="Immunoglobulins"/>
    <property type="match status" value="1"/>
</dbReference>
<dbReference type="InterPro" id="IPR013783">
    <property type="entry name" value="Ig-like_fold"/>
</dbReference>
<dbReference type="InterPro" id="IPR000535">
    <property type="entry name" value="MSP_dom"/>
</dbReference>
<dbReference type="InterPro" id="IPR051155">
    <property type="entry name" value="Nematode_MSP"/>
</dbReference>
<dbReference type="InterPro" id="IPR008962">
    <property type="entry name" value="PapD-like_sf"/>
</dbReference>
<dbReference type="PANTHER" id="PTHR22920">
    <property type="entry name" value="MAJOR SPERM PROTEIN"/>
    <property type="match status" value="1"/>
</dbReference>
<dbReference type="PANTHER" id="PTHR22920:SF7">
    <property type="entry name" value="MSP DOMAIN-CONTAINING PROTEIN-RELATED"/>
    <property type="match status" value="1"/>
</dbReference>
<dbReference type="Pfam" id="PF00635">
    <property type="entry name" value="Motile_Sperm"/>
    <property type="match status" value="1"/>
</dbReference>
<dbReference type="SUPFAM" id="SSF49354">
    <property type="entry name" value="PapD-like"/>
    <property type="match status" value="1"/>
</dbReference>
<dbReference type="PROSITE" id="PS50202">
    <property type="entry name" value="MSP"/>
    <property type="match status" value="1"/>
</dbReference>
<gene>
    <name type="primary">msp-78</name>
    <name type="ORF">T13F2.11</name>
</gene>
<organism>
    <name type="scientific">Caenorhabditis elegans</name>
    <dbReference type="NCBI Taxonomy" id="6239"/>
    <lineage>
        <taxon>Eukaryota</taxon>
        <taxon>Metazoa</taxon>
        <taxon>Ecdysozoa</taxon>
        <taxon>Nematoda</taxon>
        <taxon>Chromadorea</taxon>
        <taxon>Rhabditida</taxon>
        <taxon>Rhabditina</taxon>
        <taxon>Rhabditomorpha</taxon>
        <taxon>Rhabditoidea</taxon>
        <taxon>Rhabditidae</taxon>
        <taxon>Peloderinae</taxon>
        <taxon>Caenorhabditis</taxon>
    </lineage>
</organism>